<keyword id="KW-0150">Chloroplast</keyword>
<keyword id="KW-0934">Plastid</keyword>
<keyword id="KW-0687">Ribonucleoprotein</keyword>
<keyword id="KW-0689">Ribosomal protein</keyword>
<keyword id="KW-0694">RNA-binding</keyword>
<keyword id="KW-0699">rRNA-binding</keyword>
<feature type="chain" id="PRO_0000173186" description="Large ribosomal subunit protein bL31c">
    <location>
        <begin position="1"/>
        <end position="75"/>
    </location>
</feature>
<geneLocation type="chloroplast"/>
<gene>
    <name evidence="1" type="primary">rpl31</name>
</gene>
<dbReference type="EMBL" id="AF022186">
    <property type="protein sequence ID" value="AAF12931.1"/>
    <property type="molecule type" value="Genomic_DNA"/>
</dbReference>
<dbReference type="RefSeq" id="NP_045163.1">
    <property type="nucleotide sequence ID" value="NC_001840.1"/>
</dbReference>
<dbReference type="GeneID" id="800214"/>
<dbReference type="GO" id="GO:0009507">
    <property type="term" value="C:chloroplast"/>
    <property type="evidence" value="ECO:0007669"/>
    <property type="project" value="UniProtKB-SubCell"/>
</dbReference>
<dbReference type="GO" id="GO:1990904">
    <property type="term" value="C:ribonucleoprotein complex"/>
    <property type="evidence" value="ECO:0007669"/>
    <property type="project" value="UniProtKB-KW"/>
</dbReference>
<dbReference type="GO" id="GO:0005840">
    <property type="term" value="C:ribosome"/>
    <property type="evidence" value="ECO:0007669"/>
    <property type="project" value="UniProtKB-KW"/>
</dbReference>
<dbReference type="GO" id="GO:0019843">
    <property type="term" value="F:rRNA binding"/>
    <property type="evidence" value="ECO:0007669"/>
    <property type="project" value="UniProtKB-KW"/>
</dbReference>
<dbReference type="GO" id="GO:0003735">
    <property type="term" value="F:structural constituent of ribosome"/>
    <property type="evidence" value="ECO:0007669"/>
    <property type="project" value="InterPro"/>
</dbReference>
<dbReference type="GO" id="GO:0006412">
    <property type="term" value="P:translation"/>
    <property type="evidence" value="ECO:0007669"/>
    <property type="project" value="UniProtKB-UniRule"/>
</dbReference>
<dbReference type="Gene3D" id="4.10.830.30">
    <property type="entry name" value="Ribosomal protein L31"/>
    <property type="match status" value="1"/>
</dbReference>
<dbReference type="HAMAP" id="MF_00501">
    <property type="entry name" value="Ribosomal_bL31_1"/>
    <property type="match status" value="1"/>
</dbReference>
<dbReference type="InterPro" id="IPR034704">
    <property type="entry name" value="Ribosomal_bL28/bL31-like_sf"/>
</dbReference>
<dbReference type="InterPro" id="IPR002150">
    <property type="entry name" value="Ribosomal_bL31"/>
</dbReference>
<dbReference type="InterPro" id="IPR027491">
    <property type="entry name" value="Ribosomal_bL31_A"/>
</dbReference>
<dbReference type="InterPro" id="IPR042105">
    <property type="entry name" value="Ribosomal_bL31_sf"/>
</dbReference>
<dbReference type="NCBIfam" id="TIGR00105">
    <property type="entry name" value="L31"/>
    <property type="match status" value="1"/>
</dbReference>
<dbReference type="NCBIfam" id="NF001809">
    <property type="entry name" value="PRK00528.1"/>
    <property type="match status" value="1"/>
</dbReference>
<dbReference type="PANTHER" id="PTHR33280">
    <property type="entry name" value="50S RIBOSOMAL PROTEIN L31, CHLOROPLASTIC"/>
    <property type="match status" value="1"/>
</dbReference>
<dbReference type="PANTHER" id="PTHR33280:SF1">
    <property type="entry name" value="LARGE RIBOSOMAL SUBUNIT PROTEIN BL31C"/>
    <property type="match status" value="1"/>
</dbReference>
<dbReference type="Pfam" id="PF01197">
    <property type="entry name" value="Ribosomal_L31"/>
    <property type="match status" value="1"/>
</dbReference>
<dbReference type="PRINTS" id="PR01249">
    <property type="entry name" value="RIBOSOMALL31"/>
</dbReference>
<dbReference type="SUPFAM" id="SSF143800">
    <property type="entry name" value="L28p-like"/>
    <property type="match status" value="1"/>
</dbReference>
<dbReference type="PROSITE" id="PS01143">
    <property type="entry name" value="RIBOSOMAL_L31"/>
    <property type="match status" value="1"/>
</dbReference>
<comment type="function">
    <text evidence="1">Binds the 23S rRNA.</text>
</comment>
<comment type="subunit">
    <text evidence="1">Part of the 50S ribosomal subunit.</text>
</comment>
<comment type="subcellular location">
    <subcellularLocation>
        <location>Plastid</location>
        <location>Chloroplast</location>
    </subcellularLocation>
</comment>
<comment type="similarity">
    <text evidence="1">Belongs to the bacterial ribosomal protein bL31 family. Type A subfamily.</text>
</comment>
<accession>Q9TLV5</accession>
<reference key="1">
    <citation type="journal article" date="2000" name="J. Mol. Evol.">
        <title>The structure and gene repertoire of an ancient red algal plastid genome.</title>
        <authorList>
            <person name="Gloeckner G."/>
            <person name="Rosenthal A."/>
            <person name="Valentin K.-U."/>
        </authorList>
    </citation>
    <scope>NUCLEOTIDE SEQUENCE [LARGE SCALE GENOMIC DNA]</scope>
    <source>
        <strain>RK-1</strain>
    </source>
</reference>
<name>RK31_CYACA</name>
<organism>
    <name type="scientific">Cyanidium caldarium</name>
    <name type="common">Red alga</name>
    <dbReference type="NCBI Taxonomy" id="2771"/>
    <lineage>
        <taxon>Eukaryota</taxon>
        <taxon>Rhodophyta</taxon>
        <taxon>Bangiophyceae</taxon>
        <taxon>Cyanidiales</taxon>
        <taxon>Cyanidiaceae</taxon>
        <taxon>Cyanidium</taxon>
    </lineage>
</organism>
<evidence type="ECO:0000255" key="1">
    <source>
        <dbReference type="HAMAP-Rule" id="MF_00501"/>
    </source>
</evidence>
<evidence type="ECO:0000305" key="2"/>
<proteinExistence type="inferred from homology"/>
<sequence length="75" mass="8782">MAKKNIHPQWYEEAKFYCNGEIVKIIGSTRMEINADIWSGNHPFYIGTQKIVDTEGRIDKFIRKYNLNSENSESL</sequence>
<protein>
    <recommendedName>
        <fullName evidence="1">Large ribosomal subunit protein bL31c</fullName>
    </recommendedName>
    <alternativeName>
        <fullName evidence="2">50S ribosomal protein L31, chloroplastic</fullName>
    </alternativeName>
</protein>